<proteinExistence type="inferred from homology"/>
<protein>
    <recommendedName>
        <fullName evidence="1">Small ribosomal subunit protein bS16</fullName>
    </recommendedName>
    <alternativeName>
        <fullName evidence="3">30S ribosomal protein S16</fullName>
    </alternativeName>
</protein>
<reference key="1">
    <citation type="journal article" date="2005" name="Nat. Biotechnol.">
        <title>Complete genome sequence of the acetic acid bacterium Gluconobacter oxydans.</title>
        <authorList>
            <person name="Prust C."/>
            <person name="Hoffmeister M."/>
            <person name="Liesegang H."/>
            <person name="Wiezer A."/>
            <person name="Fricke W.F."/>
            <person name="Ehrenreich A."/>
            <person name="Gottschalk G."/>
            <person name="Deppenmeier U."/>
        </authorList>
    </citation>
    <scope>NUCLEOTIDE SEQUENCE [LARGE SCALE GENOMIC DNA]</scope>
    <source>
        <strain>621H</strain>
    </source>
</reference>
<evidence type="ECO:0000255" key="1">
    <source>
        <dbReference type="HAMAP-Rule" id="MF_00385"/>
    </source>
</evidence>
<evidence type="ECO:0000256" key="2">
    <source>
        <dbReference type="SAM" id="MobiDB-lite"/>
    </source>
</evidence>
<evidence type="ECO:0000305" key="3"/>
<keyword id="KW-1185">Reference proteome</keyword>
<keyword id="KW-0687">Ribonucleoprotein</keyword>
<keyword id="KW-0689">Ribosomal protein</keyword>
<dbReference type="EMBL" id="CP000009">
    <property type="protein sequence ID" value="AAW59986.1"/>
    <property type="molecule type" value="Genomic_DNA"/>
</dbReference>
<dbReference type="RefSeq" id="WP_011251789.1">
    <property type="nucleotide sequence ID" value="NZ_LT900338.1"/>
</dbReference>
<dbReference type="SMR" id="Q5FUG0"/>
<dbReference type="STRING" id="290633.GOX0196"/>
<dbReference type="GeneID" id="56904468"/>
<dbReference type="KEGG" id="gox:GOX0196"/>
<dbReference type="eggNOG" id="COG0228">
    <property type="taxonomic scope" value="Bacteria"/>
</dbReference>
<dbReference type="HOGENOM" id="CLU_100590_3_1_5"/>
<dbReference type="Proteomes" id="UP000006375">
    <property type="component" value="Chromosome"/>
</dbReference>
<dbReference type="GO" id="GO:0005737">
    <property type="term" value="C:cytoplasm"/>
    <property type="evidence" value="ECO:0007669"/>
    <property type="project" value="UniProtKB-ARBA"/>
</dbReference>
<dbReference type="GO" id="GO:0015935">
    <property type="term" value="C:small ribosomal subunit"/>
    <property type="evidence" value="ECO:0007669"/>
    <property type="project" value="TreeGrafter"/>
</dbReference>
<dbReference type="GO" id="GO:0003735">
    <property type="term" value="F:structural constituent of ribosome"/>
    <property type="evidence" value="ECO:0007669"/>
    <property type="project" value="InterPro"/>
</dbReference>
<dbReference type="GO" id="GO:0006412">
    <property type="term" value="P:translation"/>
    <property type="evidence" value="ECO:0007669"/>
    <property type="project" value="UniProtKB-UniRule"/>
</dbReference>
<dbReference type="Gene3D" id="3.30.1320.10">
    <property type="match status" value="1"/>
</dbReference>
<dbReference type="HAMAP" id="MF_00385">
    <property type="entry name" value="Ribosomal_bS16"/>
    <property type="match status" value="1"/>
</dbReference>
<dbReference type="InterPro" id="IPR000307">
    <property type="entry name" value="Ribosomal_bS16"/>
</dbReference>
<dbReference type="InterPro" id="IPR020592">
    <property type="entry name" value="Ribosomal_bS16_CS"/>
</dbReference>
<dbReference type="InterPro" id="IPR023803">
    <property type="entry name" value="Ribosomal_bS16_dom_sf"/>
</dbReference>
<dbReference type="NCBIfam" id="TIGR00002">
    <property type="entry name" value="S16"/>
    <property type="match status" value="1"/>
</dbReference>
<dbReference type="PANTHER" id="PTHR12919">
    <property type="entry name" value="30S RIBOSOMAL PROTEIN S16"/>
    <property type="match status" value="1"/>
</dbReference>
<dbReference type="PANTHER" id="PTHR12919:SF20">
    <property type="entry name" value="SMALL RIBOSOMAL SUBUNIT PROTEIN BS16M"/>
    <property type="match status" value="1"/>
</dbReference>
<dbReference type="Pfam" id="PF00886">
    <property type="entry name" value="Ribosomal_S16"/>
    <property type="match status" value="1"/>
</dbReference>
<dbReference type="SUPFAM" id="SSF54565">
    <property type="entry name" value="Ribosomal protein S16"/>
    <property type="match status" value="1"/>
</dbReference>
<dbReference type="PROSITE" id="PS00732">
    <property type="entry name" value="RIBOSOMAL_S16"/>
    <property type="match status" value="1"/>
</dbReference>
<accession>Q5FUG0</accession>
<organism>
    <name type="scientific">Gluconobacter oxydans (strain 621H)</name>
    <name type="common">Gluconobacter suboxydans</name>
    <dbReference type="NCBI Taxonomy" id="290633"/>
    <lineage>
        <taxon>Bacteria</taxon>
        <taxon>Pseudomonadati</taxon>
        <taxon>Pseudomonadota</taxon>
        <taxon>Alphaproteobacteria</taxon>
        <taxon>Acetobacterales</taxon>
        <taxon>Acetobacteraceae</taxon>
        <taxon>Gluconobacter</taxon>
    </lineage>
</organism>
<gene>
    <name evidence="1" type="primary">rpsP</name>
    <name type="ordered locus">GOX0196</name>
</gene>
<comment type="similarity">
    <text evidence="1">Belongs to the bacterial ribosomal protein bS16 family.</text>
</comment>
<feature type="chain" id="PRO_0000243812" description="Small ribosomal subunit protein bS16">
    <location>
        <begin position="1"/>
        <end position="115"/>
    </location>
</feature>
<feature type="region of interest" description="Disordered" evidence="2">
    <location>
        <begin position="81"/>
        <end position="115"/>
    </location>
</feature>
<sequence>MSLKIRLARAGAKKRPYYHIVVADSRSPRDGRFIEKVGSYNPMLPADHADRIRLVDERIKHWLSNGALATDRVARFLGNAGLAPKPTYNEQPKKSAPKAKAQERAKAAADAAAAA</sequence>
<name>RS16_GLUOX</name>